<sequence length="293" mass="31879">MMRIALFLLTNLAVMVVFGLVLSLTGIQSSSVQGLLIMALLFGFGGSFISLLMSKWMALKSVGGEVIEQPRNERERWLMNTVATQARQAGIAMPQVAIYHAPDINAFATGARRDASLVAVSTGLLQNMSPDEAEAVIAHEISHIANGDMVTMTLIQGVVNTFVIFISRIIAQIAAGFLGGNRDEGEGSNGNPLIYFAVATVLELVFGILASIITMWFSRYREFHADAGSAKLVGREKMIAALQRLKTSYEPQEATSMMAFCINGKSKSLSELFMTHPPLDKRIEALRSGEYLK</sequence>
<dbReference type="EC" id="3.4.24.-" evidence="1"/>
<dbReference type="EMBL" id="CP001144">
    <property type="protein sequence ID" value="ACH77688.1"/>
    <property type="molecule type" value="Genomic_DNA"/>
</dbReference>
<dbReference type="RefSeq" id="WP_000984498.1">
    <property type="nucleotide sequence ID" value="NC_011205.1"/>
</dbReference>
<dbReference type="SMR" id="B5FTJ0"/>
<dbReference type="MEROPS" id="M48.002"/>
<dbReference type="GeneID" id="66756319"/>
<dbReference type="KEGG" id="sed:SeD_A1471"/>
<dbReference type="HOGENOM" id="CLU_042266_1_0_6"/>
<dbReference type="Proteomes" id="UP000008322">
    <property type="component" value="Chromosome"/>
</dbReference>
<dbReference type="GO" id="GO:0005886">
    <property type="term" value="C:plasma membrane"/>
    <property type="evidence" value="ECO:0007669"/>
    <property type="project" value="UniProtKB-SubCell"/>
</dbReference>
<dbReference type="GO" id="GO:0004222">
    <property type="term" value="F:metalloendopeptidase activity"/>
    <property type="evidence" value="ECO:0007669"/>
    <property type="project" value="UniProtKB-UniRule"/>
</dbReference>
<dbReference type="GO" id="GO:0008270">
    <property type="term" value="F:zinc ion binding"/>
    <property type="evidence" value="ECO:0007669"/>
    <property type="project" value="UniProtKB-UniRule"/>
</dbReference>
<dbReference type="GO" id="GO:0006508">
    <property type="term" value="P:proteolysis"/>
    <property type="evidence" value="ECO:0007669"/>
    <property type="project" value="UniProtKB-KW"/>
</dbReference>
<dbReference type="CDD" id="cd07335">
    <property type="entry name" value="M48B_HtpX_like"/>
    <property type="match status" value="1"/>
</dbReference>
<dbReference type="FunFam" id="3.30.2010.10:FF:000001">
    <property type="entry name" value="Protease HtpX"/>
    <property type="match status" value="1"/>
</dbReference>
<dbReference type="Gene3D" id="3.30.2010.10">
    <property type="entry name" value="Metalloproteases ('zincins'), catalytic domain"/>
    <property type="match status" value="1"/>
</dbReference>
<dbReference type="HAMAP" id="MF_00188">
    <property type="entry name" value="Pept_M48_protease_HtpX"/>
    <property type="match status" value="1"/>
</dbReference>
<dbReference type="InterPro" id="IPR050083">
    <property type="entry name" value="HtpX_protease"/>
</dbReference>
<dbReference type="InterPro" id="IPR022919">
    <property type="entry name" value="Pept_M48_protease_HtpX"/>
</dbReference>
<dbReference type="InterPro" id="IPR001915">
    <property type="entry name" value="Peptidase_M48"/>
</dbReference>
<dbReference type="NCBIfam" id="NF003965">
    <property type="entry name" value="PRK05457.1"/>
    <property type="match status" value="1"/>
</dbReference>
<dbReference type="PANTHER" id="PTHR43221">
    <property type="entry name" value="PROTEASE HTPX"/>
    <property type="match status" value="1"/>
</dbReference>
<dbReference type="PANTHER" id="PTHR43221:SF1">
    <property type="entry name" value="PROTEASE HTPX"/>
    <property type="match status" value="1"/>
</dbReference>
<dbReference type="Pfam" id="PF01435">
    <property type="entry name" value="Peptidase_M48"/>
    <property type="match status" value="1"/>
</dbReference>
<reference key="1">
    <citation type="journal article" date="2011" name="J. Bacteriol.">
        <title>Comparative genomics of 28 Salmonella enterica isolates: evidence for CRISPR-mediated adaptive sublineage evolution.</title>
        <authorList>
            <person name="Fricke W.F."/>
            <person name="Mammel M.K."/>
            <person name="McDermott P.F."/>
            <person name="Tartera C."/>
            <person name="White D.G."/>
            <person name="Leclerc J.E."/>
            <person name="Ravel J."/>
            <person name="Cebula T.A."/>
        </authorList>
    </citation>
    <scope>NUCLEOTIDE SEQUENCE [LARGE SCALE GENOMIC DNA]</scope>
    <source>
        <strain>CT_02021853</strain>
    </source>
</reference>
<proteinExistence type="inferred from homology"/>
<gene>
    <name evidence="1" type="primary">htpX</name>
    <name type="ordered locus">SeD_A1471</name>
</gene>
<evidence type="ECO:0000255" key="1">
    <source>
        <dbReference type="HAMAP-Rule" id="MF_00188"/>
    </source>
</evidence>
<organism>
    <name type="scientific">Salmonella dublin (strain CT_02021853)</name>
    <dbReference type="NCBI Taxonomy" id="439851"/>
    <lineage>
        <taxon>Bacteria</taxon>
        <taxon>Pseudomonadati</taxon>
        <taxon>Pseudomonadota</taxon>
        <taxon>Gammaproteobacteria</taxon>
        <taxon>Enterobacterales</taxon>
        <taxon>Enterobacteriaceae</taxon>
        <taxon>Salmonella</taxon>
    </lineage>
</organism>
<comment type="cofactor">
    <cofactor evidence="1">
        <name>Zn(2+)</name>
        <dbReference type="ChEBI" id="CHEBI:29105"/>
    </cofactor>
    <text evidence="1">Binds 1 zinc ion per subunit.</text>
</comment>
<comment type="subcellular location">
    <subcellularLocation>
        <location evidence="1">Cell inner membrane</location>
        <topology evidence="1">Multi-pass membrane protein</topology>
    </subcellularLocation>
</comment>
<comment type="similarity">
    <text evidence="1">Belongs to the peptidase M48B family.</text>
</comment>
<keyword id="KW-0997">Cell inner membrane</keyword>
<keyword id="KW-1003">Cell membrane</keyword>
<keyword id="KW-0378">Hydrolase</keyword>
<keyword id="KW-0472">Membrane</keyword>
<keyword id="KW-0479">Metal-binding</keyword>
<keyword id="KW-0482">Metalloprotease</keyword>
<keyword id="KW-0645">Protease</keyword>
<keyword id="KW-0812">Transmembrane</keyword>
<keyword id="KW-1133">Transmembrane helix</keyword>
<keyword id="KW-0862">Zinc</keyword>
<accession>B5FTJ0</accession>
<name>HTPX_SALDC</name>
<feature type="chain" id="PRO_1000098840" description="Protease HtpX">
    <location>
        <begin position="1"/>
        <end position="293"/>
    </location>
</feature>
<feature type="transmembrane region" description="Helical" evidence="1">
    <location>
        <begin position="4"/>
        <end position="24"/>
    </location>
</feature>
<feature type="transmembrane region" description="Helical" evidence="1">
    <location>
        <begin position="34"/>
        <end position="54"/>
    </location>
</feature>
<feature type="transmembrane region" description="Helical" evidence="1">
    <location>
        <begin position="158"/>
        <end position="178"/>
    </location>
</feature>
<feature type="transmembrane region" description="Helical" evidence="1">
    <location>
        <begin position="193"/>
        <end position="213"/>
    </location>
</feature>
<feature type="active site" evidence="1">
    <location>
        <position position="140"/>
    </location>
</feature>
<feature type="binding site" evidence="1">
    <location>
        <position position="139"/>
    </location>
    <ligand>
        <name>Zn(2+)</name>
        <dbReference type="ChEBI" id="CHEBI:29105"/>
        <note>catalytic</note>
    </ligand>
</feature>
<feature type="binding site" evidence="1">
    <location>
        <position position="143"/>
    </location>
    <ligand>
        <name>Zn(2+)</name>
        <dbReference type="ChEBI" id="CHEBI:29105"/>
        <note>catalytic</note>
    </ligand>
</feature>
<feature type="binding site" evidence="1">
    <location>
        <position position="222"/>
    </location>
    <ligand>
        <name>Zn(2+)</name>
        <dbReference type="ChEBI" id="CHEBI:29105"/>
        <note>catalytic</note>
    </ligand>
</feature>
<protein>
    <recommendedName>
        <fullName evidence="1">Protease HtpX</fullName>
        <ecNumber evidence="1">3.4.24.-</ecNumber>
    </recommendedName>
    <alternativeName>
        <fullName evidence="1">Heat shock protein HtpX</fullName>
    </alternativeName>
</protein>